<keyword id="KW-0067">ATP-binding</keyword>
<keyword id="KW-0963">Cytoplasm</keyword>
<keyword id="KW-0460">Magnesium</keyword>
<keyword id="KW-0479">Metal-binding</keyword>
<keyword id="KW-0547">Nucleotide-binding</keyword>
<keyword id="KW-0554">One-carbon metabolism</keyword>
<keyword id="KW-0630">Potassium</keyword>
<keyword id="KW-0808">Transferase</keyword>
<protein>
    <recommendedName>
        <fullName evidence="1">S-adenosylmethionine synthase</fullName>
        <shortName evidence="1">AdoMet synthase</shortName>
        <ecNumber evidence="1">2.5.1.6</ecNumber>
    </recommendedName>
    <alternativeName>
        <fullName evidence="1">MAT</fullName>
    </alternativeName>
    <alternativeName>
        <fullName evidence="1">Methionine adenosyltransferase</fullName>
    </alternativeName>
</protein>
<proteinExistence type="inferred from homology"/>
<sequence>MSEKGRLFTSESVTEGHPDKICDAVSDSVLDALLAADPRSRVAVETLVTTGQVHVVGEVTTTAKEAFADITNIVRERILDIGYDSSDKGFDGASCGVNIGIGAQSPDIAQGVDTAHEARVEGAADPLDAQGAGDQGLMFGYAINDTPELMPLPIALAHRLSRRLTEVRKNGVLPYLRPDGKTQVTIAYEDRVPVRLDTVVISTQHADDIDLVKTLDPDIREQVLKTVLDDLAHDTLDASAVRVLVNPTGKFVLGGPMGDAGLTGRKIIVDTYGGWARHGGGAFSGKDPSKVDRSAAYAMRWVAKNVVAAGLAEGVEVQVAYAIGKAAPVGLFVETFGSEAVDPVKIEKAIGEVFDLRPGAIIRDLNLLRPIYAPTAAYGHFGRTDVDLPWERLDKVDDLKRAI</sequence>
<gene>
    <name evidence="1" type="primary">metK</name>
    <name type="ordered locus">MUL_1791</name>
</gene>
<reference key="1">
    <citation type="journal article" date="2007" name="Genome Res.">
        <title>Reductive evolution and niche adaptation inferred from the genome of Mycobacterium ulcerans, the causative agent of Buruli ulcer.</title>
        <authorList>
            <person name="Stinear T.P."/>
            <person name="Seemann T."/>
            <person name="Pidot S."/>
            <person name="Frigui W."/>
            <person name="Reysset G."/>
            <person name="Garnier T."/>
            <person name="Meurice G."/>
            <person name="Simon D."/>
            <person name="Bouchier C."/>
            <person name="Ma L."/>
            <person name="Tichit M."/>
            <person name="Porter J.L."/>
            <person name="Ryan J."/>
            <person name="Johnson P.D.R."/>
            <person name="Davies J.K."/>
            <person name="Jenkin G.A."/>
            <person name="Small P.L.C."/>
            <person name="Jones L.M."/>
            <person name="Tekaia F."/>
            <person name="Laval F."/>
            <person name="Daffe M."/>
            <person name="Parkhill J."/>
            <person name="Cole S.T."/>
        </authorList>
    </citation>
    <scope>NUCLEOTIDE SEQUENCE [LARGE SCALE GENOMIC DNA]</scope>
    <source>
        <strain>Agy99</strain>
    </source>
</reference>
<accession>A0PPJ8</accession>
<evidence type="ECO:0000255" key="1">
    <source>
        <dbReference type="HAMAP-Rule" id="MF_00086"/>
    </source>
</evidence>
<feature type="chain" id="PRO_0000302946" description="S-adenosylmethionine synthase">
    <location>
        <begin position="1"/>
        <end position="403"/>
    </location>
</feature>
<feature type="region of interest" description="Flexible loop" evidence="1">
    <location>
        <begin position="104"/>
        <end position="114"/>
    </location>
</feature>
<feature type="binding site" description="in other chain" evidence="1">
    <location>
        <position position="17"/>
    </location>
    <ligand>
        <name>ATP</name>
        <dbReference type="ChEBI" id="CHEBI:30616"/>
        <note>ligand shared between two neighboring subunits</note>
    </ligand>
</feature>
<feature type="binding site" evidence="1">
    <location>
        <position position="19"/>
    </location>
    <ligand>
        <name>Mg(2+)</name>
        <dbReference type="ChEBI" id="CHEBI:18420"/>
    </ligand>
</feature>
<feature type="binding site" evidence="1">
    <location>
        <position position="45"/>
    </location>
    <ligand>
        <name>K(+)</name>
        <dbReference type="ChEBI" id="CHEBI:29103"/>
    </ligand>
</feature>
<feature type="binding site" description="in other chain" evidence="1">
    <location>
        <position position="58"/>
    </location>
    <ligand>
        <name>L-methionine</name>
        <dbReference type="ChEBI" id="CHEBI:57844"/>
        <note>ligand shared between two neighboring subunits</note>
    </ligand>
</feature>
<feature type="binding site" description="in other chain" evidence="1">
    <location>
        <position position="104"/>
    </location>
    <ligand>
        <name>L-methionine</name>
        <dbReference type="ChEBI" id="CHEBI:57844"/>
        <note>ligand shared between two neighboring subunits</note>
    </ligand>
</feature>
<feature type="binding site" description="in other chain" evidence="1">
    <location>
        <begin position="179"/>
        <end position="181"/>
    </location>
    <ligand>
        <name>ATP</name>
        <dbReference type="ChEBI" id="CHEBI:30616"/>
        <note>ligand shared between two neighboring subunits</note>
    </ligand>
</feature>
<feature type="binding site" description="in other chain" evidence="1">
    <location>
        <begin position="250"/>
        <end position="251"/>
    </location>
    <ligand>
        <name>ATP</name>
        <dbReference type="ChEBI" id="CHEBI:30616"/>
        <note>ligand shared between two neighboring subunits</note>
    </ligand>
</feature>
<feature type="binding site" evidence="1">
    <location>
        <position position="259"/>
    </location>
    <ligand>
        <name>ATP</name>
        <dbReference type="ChEBI" id="CHEBI:30616"/>
        <note>ligand shared between two neighboring subunits</note>
    </ligand>
</feature>
<feature type="binding site" evidence="1">
    <location>
        <position position="259"/>
    </location>
    <ligand>
        <name>L-methionine</name>
        <dbReference type="ChEBI" id="CHEBI:57844"/>
        <note>ligand shared between two neighboring subunits</note>
    </ligand>
</feature>
<feature type="binding site" description="in other chain" evidence="1">
    <location>
        <begin position="265"/>
        <end position="266"/>
    </location>
    <ligand>
        <name>ATP</name>
        <dbReference type="ChEBI" id="CHEBI:30616"/>
        <note>ligand shared between two neighboring subunits</note>
    </ligand>
</feature>
<feature type="binding site" evidence="1">
    <location>
        <position position="282"/>
    </location>
    <ligand>
        <name>ATP</name>
        <dbReference type="ChEBI" id="CHEBI:30616"/>
        <note>ligand shared between two neighboring subunits</note>
    </ligand>
</feature>
<feature type="binding site" evidence="1">
    <location>
        <position position="286"/>
    </location>
    <ligand>
        <name>ATP</name>
        <dbReference type="ChEBI" id="CHEBI:30616"/>
        <note>ligand shared between two neighboring subunits</note>
    </ligand>
</feature>
<feature type="binding site" description="in other chain" evidence="1">
    <location>
        <position position="290"/>
    </location>
    <ligand>
        <name>L-methionine</name>
        <dbReference type="ChEBI" id="CHEBI:57844"/>
        <note>ligand shared between two neighboring subunits</note>
    </ligand>
</feature>
<organism>
    <name type="scientific">Mycobacterium ulcerans (strain Agy99)</name>
    <dbReference type="NCBI Taxonomy" id="362242"/>
    <lineage>
        <taxon>Bacteria</taxon>
        <taxon>Bacillati</taxon>
        <taxon>Actinomycetota</taxon>
        <taxon>Actinomycetes</taxon>
        <taxon>Mycobacteriales</taxon>
        <taxon>Mycobacteriaceae</taxon>
        <taxon>Mycobacterium</taxon>
        <taxon>Mycobacterium ulcerans group</taxon>
    </lineage>
</organism>
<comment type="function">
    <text evidence="1">Catalyzes the formation of S-adenosylmethionine (AdoMet) from methionine and ATP. The overall synthetic reaction is composed of two sequential steps, AdoMet formation and the subsequent tripolyphosphate hydrolysis which occurs prior to release of AdoMet from the enzyme.</text>
</comment>
<comment type="catalytic activity">
    <reaction evidence="1">
        <text>L-methionine + ATP + H2O = S-adenosyl-L-methionine + phosphate + diphosphate</text>
        <dbReference type="Rhea" id="RHEA:21080"/>
        <dbReference type="ChEBI" id="CHEBI:15377"/>
        <dbReference type="ChEBI" id="CHEBI:30616"/>
        <dbReference type="ChEBI" id="CHEBI:33019"/>
        <dbReference type="ChEBI" id="CHEBI:43474"/>
        <dbReference type="ChEBI" id="CHEBI:57844"/>
        <dbReference type="ChEBI" id="CHEBI:59789"/>
        <dbReference type="EC" id="2.5.1.6"/>
    </reaction>
</comment>
<comment type="cofactor">
    <cofactor evidence="1">
        <name>Mg(2+)</name>
        <dbReference type="ChEBI" id="CHEBI:18420"/>
    </cofactor>
    <text evidence="1">Binds 2 divalent ions per subunit.</text>
</comment>
<comment type="cofactor">
    <cofactor evidence="1">
        <name>K(+)</name>
        <dbReference type="ChEBI" id="CHEBI:29103"/>
    </cofactor>
    <text evidence="1">Binds 1 potassium ion per subunit.</text>
</comment>
<comment type="pathway">
    <text evidence="1">Amino-acid biosynthesis; S-adenosyl-L-methionine biosynthesis; S-adenosyl-L-methionine from L-methionine: step 1/1.</text>
</comment>
<comment type="subunit">
    <text evidence="1">Homotetramer; dimer of dimers.</text>
</comment>
<comment type="subcellular location">
    <subcellularLocation>
        <location evidence="1">Cytoplasm</location>
    </subcellularLocation>
</comment>
<comment type="similarity">
    <text evidence="1">Belongs to the AdoMet synthase family.</text>
</comment>
<dbReference type="EC" id="2.5.1.6" evidence="1"/>
<dbReference type="EMBL" id="CP000325">
    <property type="protein sequence ID" value="ABL04267.1"/>
    <property type="molecule type" value="Genomic_DNA"/>
</dbReference>
<dbReference type="RefSeq" id="WP_011739887.1">
    <property type="nucleotide sequence ID" value="NC_008611.1"/>
</dbReference>
<dbReference type="SMR" id="A0PPJ8"/>
<dbReference type="KEGG" id="mul:MUL_1791"/>
<dbReference type="eggNOG" id="COG0192">
    <property type="taxonomic scope" value="Bacteria"/>
</dbReference>
<dbReference type="HOGENOM" id="CLU_041802_1_1_11"/>
<dbReference type="UniPathway" id="UPA00315">
    <property type="reaction ID" value="UER00080"/>
</dbReference>
<dbReference type="Proteomes" id="UP000000765">
    <property type="component" value="Chromosome"/>
</dbReference>
<dbReference type="GO" id="GO:0005737">
    <property type="term" value="C:cytoplasm"/>
    <property type="evidence" value="ECO:0007669"/>
    <property type="project" value="UniProtKB-SubCell"/>
</dbReference>
<dbReference type="GO" id="GO:0005524">
    <property type="term" value="F:ATP binding"/>
    <property type="evidence" value="ECO:0007669"/>
    <property type="project" value="UniProtKB-UniRule"/>
</dbReference>
<dbReference type="GO" id="GO:0000287">
    <property type="term" value="F:magnesium ion binding"/>
    <property type="evidence" value="ECO:0007669"/>
    <property type="project" value="UniProtKB-UniRule"/>
</dbReference>
<dbReference type="GO" id="GO:0004478">
    <property type="term" value="F:methionine adenosyltransferase activity"/>
    <property type="evidence" value="ECO:0007669"/>
    <property type="project" value="UniProtKB-UniRule"/>
</dbReference>
<dbReference type="GO" id="GO:0006730">
    <property type="term" value="P:one-carbon metabolic process"/>
    <property type="evidence" value="ECO:0007669"/>
    <property type="project" value="UniProtKB-KW"/>
</dbReference>
<dbReference type="GO" id="GO:0006556">
    <property type="term" value="P:S-adenosylmethionine biosynthetic process"/>
    <property type="evidence" value="ECO:0007669"/>
    <property type="project" value="UniProtKB-UniRule"/>
</dbReference>
<dbReference type="CDD" id="cd18079">
    <property type="entry name" value="S-AdoMet_synt"/>
    <property type="match status" value="1"/>
</dbReference>
<dbReference type="FunFam" id="3.30.300.10:FF:000006">
    <property type="entry name" value="S-adenosylmethionine synthase"/>
    <property type="match status" value="1"/>
</dbReference>
<dbReference type="Gene3D" id="3.30.300.10">
    <property type="match status" value="3"/>
</dbReference>
<dbReference type="HAMAP" id="MF_00086">
    <property type="entry name" value="S_AdoMet_synth1"/>
    <property type="match status" value="1"/>
</dbReference>
<dbReference type="InterPro" id="IPR022631">
    <property type="entry name" value="ADOMET_SYNTHASE_CS"/>
</dbReference>
<dbReference type="InterPro" id="IPR022630">
    <property type="entry name" value="S-AdoMet_synt_C"/>
</dbReference>
<dbReference type="InterPro" id="IPR022629">
    <property type="entry name" value="S-AdoMet_synt_central"/>
</dbReference>
<dbReference type="InterPro" id="IPR022628">
    <property type="entry name" value="S-AdoMet_synt_N"/>
</dbReference>
<dbReference type="InterPro" id="IPR002133">
    <property type="entry name" value="S-AdoMet_synthetase"/>
</dbReference>
<dbReference type="InterPro" id="IPR022636">
    <property type="entry name" value="S-AdoMet_synthetase_sfam"/>
</dbReference>
<dbReference type="NCBIfam" id="TIGR01034">
    <property type="entry name" value="metK"/>
    <property type="match status" value="1"/>
</dbReference>
<dbReference type="PANTHER" id="PTHR11964">
    <property type="entry name" value="S-ADENOSYLMETHIONINE SYNTHETASE"/>
    <property type="match status" value="1"/>
</dbReference>
<dbReference type="Pfam" id="PF02773">
    <property type="entry name" value="S-AdoMet_synt_C"/>
    <property type="match status" value="1"/>
</dbReference>
<dbReference type="Pfam" id="PF02772">
    <property type="entry name" value="S-AdoMet_synt_M"/>
    <property type="match status" value="1"/>
</dbReference>
<dbReference type="Pfam" id="PF00438">
    <property type="entry name" value="S-AdoMet_synt_N"/>
    <property type="match status" value="1"/>
</dbReference>
<dbReference type="PIRSF" id="PIRSF000497">
    <property type="entry name" value="MAT"/>
    <property type="match status" value="1"/>
</dbReference>
<dbReference type="SUPFAM" id="SSF55973">
    <property type="entry name" value="S-adenosylmethionine synthetase"/>
    <property type="match status" value="3"/>
</dbReference>
<dbReference type="PROSITE" id="PS00376">
    <property type="entry name" value="ADOMET_SYNTHASE_1"/>
    <property type="match status" value="1"/>
</dbReference>
<dbReference type="PROSITE" id="PS00377">
    <property type="entry name" value="ADOMET_SYNTHASE_2"/>
    <property type="match status" value="1"/>
</dbReference>
<name>METK_MYCUA</name>